<organism>
    <name type="scientific">Neisseria meningitidis serogroup C / serotype 2a (strain ATCC 700532 / DSM 15464 / FAM18)</name>
    <dbReference type="NCBI Taxonomy" id="272831"/>
    <lineage>
        <taxon>Bacteria</taxon>
        <taxon>Pseudomonadati</taxon>
        <taxon>Pseudomonadota</taxon>
        <taxon>Betaproteobacteria</taxon>
        <taxon>Neisseriales</taxon>
        <taxon>Neisseriaceae</taxon>
        <taxon>Neisseria</taxon>
    </lineage>
</organism>
<evidence type="ECO:0000255" key="1">
    <source>
        <dbReference type="HAMAP-Rule" id="MF_00087"/>
    </source>
</evidence>
<proteinExistence type="inferred from homology"/>
<keyword id="KW-0521">NADP</keyword>
<keyword id="KW-0560">Oxidoreductase</keyword>
<keyword id="KW-0627">Porphyrin biosynthesis</keyword>
<accession>A1KSI5</accession>
<comment type="function">
    <text evidence="1">Catalyzes the NADPH-dependent reduction of glutamyl-tRNA(Glu) to glutamate 1-semialdehyde (GSA).</text>
</comment>
<comment type="catalytic activity">
    <reaction evidence="1">
        <text>(S)-4-amino-5-oxopentanoate + tRNA(Glu) + NADP(+) = L-glutamyl-tRNA(Glu) + NADPH + H(+)</text>
        <dbReference type="Rhea" id="RHEA:12344"/>
        <dbReference type="Rhea" id="RHEA-COMP:9663"/>
        <dbReference type="Rhea" id="RHEA-COMP:9680"/>
        <dbReference type="ChEBI" id="CHEBI:15378"/>
        <dbReference type="ChEBI" id="CHEBI:57501"/>
        <dbReference type="ChEBI" id="CHEBI:57783"/>
        <dbReference type="ChEBI" id="CHEBI:58349"/>
        <dbReference type="ChEBI" id="CHEBI:78442"/>
        <dbReference type="ChEBI" id="CHEBI:78520"/>
        <dbReference type="EC" id="1.2.1.70"/>
    </reaction>
</comment>
<comment type="pathway">
    <text evidence="1">Porphyrin-containing compound metabolism; protoporphyrin-IX biosynthesis; 5-aminolevulinate from L-glutamyl-tRNA(Glu): step 1/2.</text>
</comment>
<comment type="subunit">
    <text evidence="1">Homodimer.</text>
</comment>
<comment type="domain">
    <text evidence="1">Possesses an unusual extended V-shaped dimeric structure with each monomer consisting of three distinct domains arranged along a curved 'spinal' alpha-helix. The N-terminal catalytic domain specifically recognizes the glutamate moiety of the substrate. The second domain is the NADPH-binding domain, and the third C-terminal domain is responsible for dimerization.</text>
</comment>
<comment type="miscellaneous">
    <text evidence="1">During catalysis, the active site Cys acts as a nucleophile attacking the alpha-carbonyl group of tRNA-bound glutamate with the formation of a thioester intermediate between enzyme and glutamate, and the concomitant release of tRNA(Glu). The thioester intermediate is finally reduced by direct hydride transfer from NADPH, to form the product GSA.</text>
</comment>
<comment type="similarity">
    <text evidence="1">Belongs to the glutamyl-tRNA reductase family.</text>
</comment>
<protein>
    <recommendedName>
        <fullName evidence="1">Glutamyl-tRNA reductase</fullName>
        <shortName evidence="1">GluTR</shortName>
        <ecNumber evidence="1">1.2.1.70</ecNumber>
    </recommendedName>
</protein>
<name>HEM1_NEIMF</name>
<dbReference type="EC" id="1.2.1.70" evidence="1"/>
<dbReference type="EMBL" id="AM421808">
    <property type="protein sequence ID" value="CAM09815.1"/>
    <property type="molecule type" value="Genomic_DNA"/>
</dbReference>
<dbReference type="RefSeq" id="WP_002221356.1">
    <property type="nucleotide sequence ID" value="NC_008767.1"/>
</dbReference>
<dbReference type="SMR" id="A1KSI5"/>
<dbReference type="GeneID" id="93386609"/>
<dbReference type="KEGG" id="nmc:NMC0518"/>
<dbReference type="HOGENOM" id="CLU_035113_2_2_4"/>
<dbReference type="UniPathway" id="UPA00251">
    <property type="reaction ID" value="UER00316"/>
</dbReference>
<dbReference type="Proteomes" id="UP000002286">
    <property type="component" value="Chromosome"/>
</dbReference>
<dbReference type="GO" id="GO:0008883">
    <property type="term" value="F:glutamyl-tRNA reductase activity"/>
    <property type="evidence" value="ECO:0007669"/>
    <property type="project" value="UniProtKB-UniRule"/>
</dbReference>
<dbReference type="GO" id="GO:0050661">
    <property type="term" value="F:NADP binding"/>
    <property type="evidence" value="ECO:0007669"/>
    <property type="project" value="InterPro"/>
</dbReference>
<dbReference type="GO" id="GO:0019353">
    <property type="term" value="P:protoporphyrinogen IX biosynthetic process from glutamate"/>
    <property type="evidence" value="ECO:0007669"/>
    <property type="project" value="TreeGrafter"/>
</dbReference>
<dbReference type="CDD" id="cd05213">
    <property type="entry name" value="NAD_bind_Glutamyl_tRNA_reduct"/>
    <property type="match status" value="1"/>
</dbReference>
<dbReference type="FunFam" id="3.30.460.30:FF:000001">
    <property type="entry name" value="Glutamyl-tRNA reductase"/>
    <property type="match status" value="1"/>
</dbReference>
<dbReference type="FunFam" id="3.40.50.720:FF:000031">
    <property type="entry name" value="Glutamyl-tRNA reductase"/>
    <property type="match status" value="1"/>
</dbReference>
<dbReference type="Gene3D" id="3.30.460.30">
    <property type="entry name" value="Glutamyl-tRNA reductase, N-terminal domain"/>
    <property type="match status" value="1"/>
</dbReference>
<dbReference type="Gene3D" id="3.40.50.720">
    <property type="entry name" value="NAD(P)-binding Rossmann-like Domain"/>
    <property type="match status" value="1"/>
</dbReference>
<dbReference type="HAMAP" id="MF_00087">
    <property type="entry name" value="Glu_tRNA_reductase"/>
    <property type="match status" value="1"/>
</dbReference>
<dbReference type="InterPro" id="IPR000343">
    <property type="entry name" value="4pyrrol_synth_GluRdtase"/>
</dbReference>
<dbReference type="InterPro" id="IPR015896">
    <property type="entry name" value="4pyrrol_synth_GluRdtase_dimer"/>
</dbReference>
<dbReference type="InterPro" id="IPR015895">
    <property type="entry name" value="4pyrrol_synth_GluRdtase_N"/>
</dbReference>
<dbReference type="InterPro" id="IPR018214">
    <property type="entry name" value="GluRdtase_CS"/>
</dbReference>
<dbReference type="InterPro" id="IPR036453">
    <property type="entry name" value="GluRdtase_dimer_dom_sf"/>
</dbReference>
<dbReference type="InterPro" id="IPR036343">
    <property type="entry name" value="GluRdtase_N_sf"/>
</dbReference>
<dbReference type="InterPro" id="IPR036291">
    <property type="entry name" value="NAD(P)-bd_dom_sf"/>
</dbReference>
<dbReference type="InterPro" id="IPR006151">
    <property type="entry name" value="Shikm_DH/Glu-tRNA_Rdtase"/>
</dbReference>
<dbReference type="NCBIfam" id="TIGR01035">
    <property type="entry name" value="hemA"/>
    <property type="match status" value="1"/>
</dbReference>
<dbReference type="PANTHER" id="PTHR43013">
    <property type="entry name" value="GLUTAMYL-TRNA REDUCTASE"/>
    <property type="match status" value="1"/>
</dbReference>
<dbReference type="PANTHER" id="PTHR43013:SF1">
    <property type="entry name" value="GLUTAMYL-TRNA REDUCTASE"/>
    <property type="match status" value="1"/>
</dbReference>
<dbReference type="Pfam" id="PF00745">
    <property type="entry name" value="GlutR_dimer"/>
    <property type="match status" value="1"/>
</dbReference>
<dbReference type="Pfam" id="PF05201">
    <property type="entry name" value="GlutR_N"/>
    <property type="match status" value="1"/>
</dbReference>
<dbReference type="Pfam" id="PF01488">
    <property type="entry name" value="Shikimate_DH"/>
    <property type="match status" value="1"/>
</dbReference>
<dbReference type="PIRSF" id="PIRSF000445">
    <property type="entry name" value="4pyrrol_synth_GluRdtase"/>
    <property type="match status" value="1"/>
</dbReference>
<dbReference type="SUPFAM" id="SSF69742">
    <property type="entry name" value="Glutamyl tRNA-reductase catalytic, N-terminal domain"/>
    <property type="match status" value="1"/>
</dbReference>
<dbReference type="SUPFAM" id="SSF69075">
    <property type="entry name" value="Glutamyl tRNA-reductase dimerization domain"/>
    <property type="match status" value="1"/>
</dbReference>
<dbReference type="SUPFAM" id="SSF51735">
    <property type="entry name" value="NAD(P)-binding Rossmann-fold domains"/>
    <property type="match status" value="1"/>
</dbReference>
<dbReference type="PROSITE" id="PS00747">
    <property type="entry name" value="GLUTR"/>
    <property type="match status" value="1"/>
</dbReference>
<reference key="1">
    <citation type="journal article" date="2007" name="PLoS Genet.">
        <title>Meningococcal genetic variation mechanisms viewed through comparative analysis of serogroup C strain FAM18.</title>
        <authorList>
            <person name="Bentley S.D."/>
            <person name="Vernikos G.S."/>
            <person name="Snyder L.A.S."/>
            <person name="Churcher C."/>
            <person name="Arrowsmith C."/>
            <person name="Chillingworth T."/>
            <person name="Cronin A."/>
            <person name="Davis P.H."/>
            <person name="Holroyd N.E."/>
            <person name="Jagels K."/>
            <person name="Maddison M."/>
            <person name="Moule S."/>
            <person name="Rabbinowitsch E."/>
            <person name="Sharp S."/>
            <person name="Unwin L."/>
            <person name="Whitehead S."/>
            <person name="Quail M.A."/>
            <person name="Achtman M."/>
            <person name="Barrell B.G."/>
            <person name="Saunders N.J."/>
            <person name="Parkhill J."/>
        </authorList>
    </citation>
    <scope>NUCLEOTIDE SEQUENCE [LARGE SCALE GENOMIC DNA]</scope>
    <source>
        <strain>ATCC 700532 / DSM 15464 / FAM18</strain>
    </source>
</reference>
<sequence>MQLTAVGLNHQTAPLSIREKLAFAAACLPEAVRNLARSNAATEAVILSTCNRTELYCVGDSEEIIRWLADYHSLPIEEISPYLYTLGMQETVRHAFRVACGLDSMVLGEPQILGQIKDAVRVAQEQESMGKKLNALFQKTFSVAKEVRTDTAVGENSVSMASASVKLAEQIFPDIGDLNVLFIGAGEMIELVATYFAAKSPRLMTVANRTLARAQELCDKLGVNAEPCLLSDLPAILHEYDVVVSSTASQLPIVGKGMVERALKQRQSMPLFMLDLAVPRDIEAEVGDLNDAYLYTVDDMVNIVQSGKEARQKAAAAAETLVSEKVAEFVRQQQGRQSVPLIRALRDEGEKARKQVLENAMKQLAKGATAEEVLERLSIQLTNKLLHSPTQTLNKAGEEDKDLVHAVAQIYHLDK</sequence>
<feature type="chain" id="PRO_1000004655" description="Glutamyl-tRNA reductase">
    <location>
        <begin position="1"/>
        <end position="415"/>
    </location>
</feature>
<feature type="active site" description="Nucleophile" evidence="1">
    <location>
        <position position="50"/>
    </location>
</feature>
<feature type="binding site" evidence="1">
    <location>
        <begin position="49"/>
        <end position="52"/>
    </location>
    <ligand>
        <name>substrate</name>
    </ligand>
</feature>
<feature type="binding site" evidence="1">
    <location>
        <position position="104"/>
    </location>
    <ligand>
        <name>substrate</name>
    </ligand>
</feature>
<feature type="binding site" evidence="1">
    <location>
        <begin position="109"/>
        <end position="111"/>
    </location>
    <ligand>
        <name>substrate</name>
    </ligand>
</feature>
<feature type="binding site" evidence="1">
    <location>
        <position position="115"/>
    </location>
    <ligand>
        <name>substrate</name>
    </ligand>
</feature>
<feature type="binding site" evidence="1">
    <location>
        <begin position="184"/>
        <end position="189"/>
    </location>
    <ligand>
        <name>NADP(+)</name>
        <dbReference type="ChEBI" id="CHEBI:58349"/>
    </ligand>
</feature>
<feature type="site" description="Important for activity" evidence="1">
    <location>
        <position position="94"/>
    </location>
</feature>
<gene>
    <name evidence="1" type="primary">hemA</name>
    <name type="ordered locus">NMC0518</name>
</gene>